<keyword id="KW-0020">Allergen</keyword>
<keyword id="KW-1015">Disulfide bond</keyword>
<keyword id="KW-0446">Lipid-binding</keyword>
<keyword id="KW-0732">Signal</keyword>
<keyword id="KW-0813">Transport</keyword>
<evidence type="ECO:0000250" key="1"/>
<evidence type="ECO:0000255" key="2"/>
<evidence type="ECO:0000256" key="3">
    <source>
        <dbReference type="SAM" id="MobiDB-lite"/>
    </source>
</evidence>
<evidence type="ECO:0000305" key="4"/>
<dbReference type="EMBL" id="X95867">
    <property type="protein sequence ID" value="CAA65123.1"/>
    <property type="molecule type" value="mRNA"/>
</dbReference>
<dbReference type="SMR" id="O04404"/>
<dbReference type="Allergome" id="503">
    <property type="allergen name" value="Par j 1"/>
</dbReference>
<dbReference type="Allergome" id="505">
    <property type="allergen name" value="Par j 1.0102"/>
</dbReference>
<dbReference type="GO" id="GO:0008289">
    <property type="term" value="F:lipid binding"/>
    <property type="evidence" value="ECO:0007669"/>
    <property type="project" value="UniProtKB-KW"/>
</dbReference>
<dbReference type="GO" id="GO:0006869">
    <property type="term" value="P:lipid transport"/>
    <property type="evidence" value="ECO:0007669"/>
    <property type="project" value="InterPro"/>
</dbReference>
<dbReference type="CDD" id="cd01960">
    <property type="entry name" value="nsLTP1"/>
    <property type="match status" value="1"/>
</dbReference>
<dbReference type="Gene3D" id="1.10.110.10">
    <property type="entry name" value="Plant lipid-transfer and hydrophobic proteins"/>
    <property type="match status" value="1"/>
</dbReference>
<dbReference type="InterPro" id="IPR036312">
    <property type="entry name" value="Bifun_inhib/LTP/seed_sf"/>
</dbReference>
<dbReference type="InterPro" id="IPR016140">
    <property type="entry name" value="Bifunc_inhib/LTP/seed_store"/>
</dbReference>
<dbReference type="InterPro" id="IPR000528">
    <property type="entry name" value="Plant_nsLTP"/>
</dbReference>
<dbReference type="PANTHER" id="PTHR33076">
    <property type="entry name" value="NON-SPECIFIC LIPID-TRANSFER PROTEIN 2-RELATED"/>
    <property type="match status" value="1"/>
</dbReference>
<dbReference type="Pfam" id="PF00234">
    <property type="entry name" value="Tryp_alpha_amyl"/>
    <property type="match status" value="1"/>
</dbReference>
<dbReference type="PRINTS" id="PR00382">
    <property type="entry name" value="LIPIDTRNSFER"/>
</dbReference>
<dbReference type="SMART" id="SM00499">
    <property type="entry name" value="AAI"/>
    <property type="match status" value="1"/>
</dbReference>
<dbReference type="SUPFAM" id="SSF47699">
    <property type="entry name" value="Bifunctional inhibitor/lipid-transfer protein/seed storage 2S albumin"/>
    <property type="match status" value="1"/>
</dbReference>
<dbReference type="PROSITE" id="PS00597">
    <property type="entry name" value="PLANT_LTP"/>
    <property type="match status" value="1"/>
</dbReference>
<protein>
    <recommendedName>
        <fullName>Probable non-specific lipid-transfer protein 1</fullName>
        <shortName>LTP</shortName>
    </recommendedName>
    <alternativeName>
        <fullName>Allergen Par j I</fullName>
    </alternativeName>
    <alternativeName>
        <fullName>Major pollen allergen Par j 1.0102</fullName>
    </alternativeName>
    <alternativeName>
        <fullName>Protein P9</fullName>
    </alternativeName>
    <allergenName>Par j 1.0102</allergenName>
</protein>
<comment type="function">
    <text>Plant non-specific lipid-transfer proteins transfer phospholipids as well as galactolipids across membranes. May play a role in wax or cutin deposition in the cell walls of expanding epidermal cells and certain secretory tissues.</text>
</comment>
<comment type="allergen">
    <text>Causes an allergic reaction in human. Binds to IgE and induces histamine release from basophils of Pj-pollen-allergic subjects.</text>
</comment>
<comment type="similarity">
    <text evidence="4">Belongs to the plant LTP family.</text>
</comment>
<organism>
    <name type="scientific">Parietaria judaica</name>
    <name type="common">Pellitory-of-the-wall</name>
    <name type="synonym">Parietaria diffusa</name>
    <dbReference type="NCBI Taxonomy" id="33127"/>
    <lineage>
        <taxon>Eukaryota</taxon>
        <taxon>Viridiplantae</taxon>
        <taxon>Streptophyta</taxon>
        <taxon>Embryophyta</taxon>
        <taxon>Tracheophyta</taxon>
        <taxon>Spermatophyta</taxon>
        <taxon>Magnoliopsida</taxon>
        <taxon>eudicotyledons</taxon>
        <taxon>Gunneridae</taxon>
        <taxon>Pentapetalae</taxon>
        <taxon>rosids</taxon>
        <taxon>fabids</taxon>
        <taxon>Rosales</taxon>
        <taxon>Urticaceae</taxon>
        <taxon>Parietaria</taxon>
    </lineage>
</organism>
<proteinExistence type="evidence at protein level"/>
<feature type="signal peptide" evidence="2">
    <location>
        <begin position="1"/>
        <end position="37"/>
    </location>
</feature>
<feature type="chain" id="PRO_0000018396" description="Probable non-specific lipid-transfer protein 1">
    <location>
        <begin position="38"/>
        <end position="176"/>
    </location>
</feature>
<feature type="region of interest" description="Disordered" evidence="3">
    <location>
        <begin position="139"/>
        <end position="176"/>
    </location>
</feature>
<feature type="compositionally biased region" description="Basic and acidic residues" evidence="3">
    <location>
        <begin position="155"/>
        <end position="165"/>
    </location>
</feature>
<feature type="compositionally biased region" description="Pro residues" evidence="3">
    <location>
        <begin position="167"/>
        <end position="176"/>
    </location>
</feature>
<feature type="disulfide bond" evidence="1">
    <location>
        <begin position="41"/>
        <end position="89"/>
    </location>
</feature>
<feature type="disulfide bond" evidence="1">
    <location>
        <begin position="51"/>
        <end position="66"/>
    </location>
</feature>
<feature type="disulfide bond" evidence="1">
    <location>
        <begin position="67"/>
        <end position="112"/>
    </location>
</feature>
<feature type="disulfide bond" evidence="1">
    <location>
        <begin position="87"/>
        <end position="128"/>
    </location>
</feature>
<accession>O04404</accession>
<sequence length="176" mass="18455">MRTVSAPSAVALVVIVAAGLAWTSLASVAPPAPAPGSEETCGTVVRALMPCLPFVQGKEKEPSKGCCSGAKRLDGETKTGLQRVHACECIQTAMKTYSDIDGKLVSEVPKHCGIVDSKLPPIDVNMDCKTLGVVPRQPQLPVSLRHGPVTGPSDPAHKARLERPQIRVPPPAPEKA</sequence>
<reference key="1">
    <citation type="journal article" date="1997" name="Int. Arch. Allergy Immunol.">
        <title>Isolation and characterization of two cDNA clones coding for isoforms of the Parietaria judaica major allergen Par j 1.0101.</title>
        <authorList>
            <person name="Duro G."/>
            <person name="Colombo P."/>
            <person name="Costa M.A."/>
            <person name="Izzo V."/>
            <person name="Porcasi R."/>
            <person name="di Fiore R."/>
            <person name="Locorotondo G."/>
            <person name="Cocchiara R."/>
            <person name="Geraci D."/>
        </authorList>
    </citation>
    <scope>NUCLEOTIDE SEQUENCE [MRNA]</scope>
    <source>
        <tissue>Pollen</tissue>
    </source>
</reference>
<name>NLT12_PARJU</name>